<proteinExistence type="evidence at protein level"/>
<evidence type="ECO:0000250" key="1"/>
<evidence type="ECO:0000305" key="2"/>
<evidence type="ECO:0007829" key="3">
    <source>
        <dbReference type="PDB" id="3OND"/>
    </source>
</evidence>
<evidence type="ECO:0007829" key="4">
    <source>
        <dbReference type="PDB" id="3ONF"/>
    </source>
</evidence>
<protein>
    <recommendedName>
        <fullName>Adenosylhomocysteinase</fullName>
        <shortName>AdoHcyase</shortName>
        <ecNumber>3.13.2.1</ecNumber>
    </recommendedName>
    <alternativeName>
        <fullName>S-adenosyl-L-homocysteine hydrolase</fullName>
    </alternativeName>
</protein>
<accession>Q9SP37</accession>
<keyword id="KW-0002">3D-structure</keyword>
<keyword id="KW-0378">Hydrolase</keyword>
<keyword id="KW-0520">NAD</keyword>
<keyword id="KW-0554">One-carbon metabolism</keyword>
<name>SAHH_LUPLU</name>
<organism>
    <name type="scientific">Lupinus luteus</name>
    <name type="common">European yellow lupine</name>
    <dbReference type="NCBI Taxonomy" id="3873"/>
    <lineage>
        <taxon>Eukaryota</taxon>
        <taxon>Viridiplantae</taxon>
        <taxon>Streptophyta</taxon>
        <taxon>Embryophyta</taxon>
        <taxon>Tracheophyta</taxon>
        <taxon>Spermatophyta</taxon>
        <taxon>Magnoliopsida</taxon>
        <taxon>eudicotyledons</taxon>
        <taxon>Gunneridae</taxon>
        <taxon>Pentapetalae</taxon>
        <taxon>rosids</taxon>
        <taxon>fabids</taxon>
        <taxon>Fabales</taxon>
        <taxon>Fabaceae</taxon>
        <taxon>Papilionoideae</taxon>
        <taxon>50 kb inversion clade</taxon>
        <taxon>genistoids sensu lato</taxon>
        <taxon>core genistoids</taxon>
        <taxon>Genisteae</taxon>
        <taxon>Lupinus</taxon>
    </lineage>
</organism>
<comment type="function">
    <text evidence="1">Adenosylhomocysteine is a competitive inhibitor of S-adenosyl-L-methionine-dependent methyl transferase reactions; therefore adenosylhomocysteinase may play a key role in the control of methylations via regulation of the intracellular concentration of adenosylhomocysteine.</text>
</comment>
<comment type="catalytic activity">
    <reaction>
        <text>S-adenosyl-L-homocysteine + H2O = L-homocysteine + adenosine</text>
        <dbReference type="Rhea" id="RHEA:21708"/>
        <dbReference type="ChEBI" id="CHEBI:15377"/>
        <dbReference type="ChEBI" id="CHEBI:16335"/>
        <dbReference type="ChEBI" id="CHEBI:57856"/>
        <dbReference type="ChEBI" id="CHEBI:58199"/>
        <dbReference type="EC" id="3.13.2.1"/>
    </reaction>
</comment>
<comment type="cofactor">
    <cofactor evidence="1">
        <name>NAD(+)</name>
        <dbReference type="ChEBI" id="CHEBI:57540"/>
    </cofactor>
    <text evidence="1">Binds 1 NAD(+) per subunit.</text>
</comment>
<comment type="pathway">
    <text>Amino-acid biosynthesis; L-homocysteine biosynthesis; L-homocysteine from S-adenosyl-L-homocysteine: step 1/1.</text>
</comment>
<comment type="similarity">
    <text evidence="2">Belongs to the adenosylhomocysteinase family.</text>
</comment>
<sequence length="485" mass="53326">MALLVEKTTSGREYKVKDMSQADFGRLEIELAEVEMPGLMASRSEFGPSQPFKGAKITGSLHMTIQTAVLIETLTALGAEVRWCSCNIFSTQDHAAAAIARDSAAVFAWKGETLQEYWWCTERALDWGPGGGPDLIVDDGGDTTLLIHEGVKAEEIYEKSGQFPDPDSTDNAEFKIVLSIIKEGLKTDPKRYHKMKDRVVGVSEETTTGVKRLYQMQANGTLLFPAINVNDSVTKSKFDNLYGCRHSLPDGLMRATDVMIAGKVAVVAGYGDVGKGCAAALKQAGARVIVTEIDPICALQATMEGLQVLTLEDVVSEADIFVTTTGNKDIIMLDHMKKMKNNAIVCNIGHFDNEIDMLGLETHPGVKRITIKPQTDRWVFPETNTGIIILAEGRLMNLGCATGHPSFVMSCSFTNQVIAQLELWNEKSSGKYEKKVYVLPKHLDEKVAALHLEKLGAKLTKLSKDQADYISVPVEGPYKPFHYRY</sequence>
<dbReference type="EC" id="3.13.2.1"/>
<dbReference type="EMBL" id="AF185635">
    <property type="protein sequence ID" value="AAD56048.1"/>
    <property type="molecule type" value="mRNA"/>
</dbReference>
<dbReference type="PDB" id="3OND">
    <property type="method" value="X-ray"/>
    <property type="resolution" value="1.17 A"/>
    <property type="chains" value="A/B=1-485"/>
</dbReference>
<dbReference type="PDB" id="3ONE">
    <property type="method" value="X-ray"/>
    <property type="resolution" value="1.35 A"/>
    <property type="chains" value="A/B=1-485"/>
</dbReference>
<dbReference type="PDB" id="3ONF">
    <property type="method" value="X-ray"/>
    <property type="resolution" value="2.00 A"/>
    <property type="chains" value="A/B=1-485"/>
</dbReference>
<dbReference type="PDBsum" id="3OND"/>
<dbReference type="PDBsum" id="3ONE"/>
<dbReference type="PDBsum" id="3ONF"/>
<dbReference type="SMR" id="Q9SP37"/>
<dbReference type="BRENDA" id="3.3.1.1">
    <property type="organism ID" value="3093"/>
</dbReference>
<dbReference type="UniPathway" id="UPA00314">
    <property type="reaction ID" value="UER00076"/>
</dbReference>
<dbReference type="EvolutionaryTrace" id="Q9SP37"/>
<dbReference type="GO" id="GO:0005829">
    <property type="term" value="C:cytosol"/>
    <property type="evidence" value="ECO:0007669"/>
    <property type="project" value="TreeGrafter"/>
</dbReference>
<dbReference type="GO" id="GO:0004013">
    <property type="term" value="F:adenosylhomocysteinase activity"/>
    <property type="evidence" value="ECO:0007669"/>
    <property type="project" value="RHEA"/>
</dbReference>
<dbReference type="GO" id="GO:0006730">
    <property type="term" value="P:one-carbon metabolic process"/>
    <property type="evidence" value="ECO:0007669"/>
    <property type="project" value="UniProtKB-KW"/>
</dbReference>
<dbReference type="GO" id="GO:0033353">
    <property type="term" value="P:S-adenosylmethionine cycle"/>
    <property type="evidence" value="ECO:0007669"/>
    <property type="project" value="TreeGrafter"/>
</dbReference>
<dbReference type="CDD" id="cd00401">
    <property type="entry name" value="SAHH"/>
    <property type="match status" value="1"/>
</dbReference>
<dbReference type="FunFam" id="3.40.50.720:FF:000004">
    <property type="entry name" value="Adenosylhomocysteinase"/>
    <property type="match status" value="1"/>
</dbReference>
<dbReference type="Gene3D" id="3.40.50.1480">
    <property type="entry name" value="Adenosylhomocysteinase-like"/>
    <property type="match status" value="1"/>
</dbReference>
<dbReference type="Gene3D" id="3.40.50.720">
    <property type="entry name" value="NAD(P)-binding Rossmann-like Domain"/>
    <property type="match status" value="1"/>
</dbReference>
<dbReference type="HAMAP" id="MF_00563">
    <property type="entry name" value="AdoHcyase"/>
    <property type="match status" value="1"/>
</dbReference>
<dbReference type="InterPro" id="IPR042172">
    <property type="entry name" value="Adenosylhomocyst_ase-like_sf"/>
</dbReference>
<dbReference type="InterPro" id="IPR000043">
    <property type="entry name" value="Adenosylhomocysteinase-like"/>
</dbReference>
<dbReference type="InterPro" id="IPR015878">
    <property type="entry name" value="Ado_hCys_hydrolase_NAD-bd"/>
</dbReference>
<dbReference type="InterPro" id="IPR036291">
    <property type="entry name" value="NAD(P)-bd_dom_sf"/>
</dbReference>
<dbReference type="InterPro" id="IPR020082">
    <property type="entry name" value="S-Ado-L-homoCys_hydrolase_CS"/>
</dbReference>
<dbReference type="NCBIfam" id="TIGR00936">
    <property type="entry name" value="ahcY"/>
    <property type="match status" value="1"/>
</dbReference>
<dbReference type="NCBIfam" id="NF004005">
    <property type="entry name" value="PRK05476.2-3"/>
    <property type="match status" value="1"/>
</dbReference>
<dbReference type="PANTHER" id="PTHR23420">
    <property type="entry name" value="ADENOSYLHOMOCYSTEINASE"/>
    <property type="match status" value="1"/>
</dbReference>
<dbReference type="PANTHER" id="PTHR23420:SF0">
    <property type="entry name" value="ADENOSYLHOMOCYSTEINASE"/>
    <property type="match status" value="1"/>
</dbReference>
<dbReference type="Pfam" id="PF05221">
    <property type="entry name" value="AdoHcyase"/>
    <property type="match status" value="1"/>
</dbReference>
<dbReference type="Pfam" id="PF00670">
    <property type="entry name" value="AdoHcyase_NAD"/>
    <property type="match status" value="1"/>
</dbReference>
<dbReference type="PIRSF" id="PIRSF001109">
    <property type="entry name" value="Ad_hcy_hydrolase"/>
    <property type="match status" value="1"/>
</dbReference>
<dbReference type="SMART" id="SM00996">
    <property type="entry name" value="AdoHcyase"/>
    <property type="match status" value="1"/>
</dbReference>
<dbReference type="SMART" id="SM00997">
    <property type="entry name" value="AdoHcyase_NAD"/>
    <property type="match status" value="1"/>
</dbReference>
<dbReference type="SUPFAM" id="SSF52283">
    <property type="entry name" value="Formate/glycerate dehydrogenase catalytic domain-like"/>
    <property type="match status" value="2"/>
</dbReference>
<dbReference type="SUPFAM" id="SSF51735">
    <property type="entry name" value="NAD(P)-binding Rossmann-fold domains"/>
    <property type="match status" value="1"/>
</dbReference>
<dbReference type="PROSITE" id="PS00738">
    <property type="entry name" value="ADOHCYASE_1"/>
    <property type="match status" value="1"/>
</dbReference>
<dbReference type="PROSITE" id="PS00739">
    <property type="entry name" value="ADOHCYASE_2"/>
    <property type="match status" value="1"/>
</dbReference>
<feature type="chain" id="PRO_0000116923" description="Adenosylhomocysteinase">
    <location>
        <begin position="1"/>
        <end position="485"/>
    </location>
</feature>
<feature type="binding site" evidence="1">
    <location>
        <position position="64"/>
    </location>
    <ligand>
        <name>substrate</name>
    </ligand>
</feature>
<feature type="binding site" evidence="1">
    <location>
        <position position="139"/>
    </location>
    <ligand>
        <name>substrate</name>
    </ligand>
</feature>
<feature type="binding site" evidence="1">
    <location>
        <position position="205"/>
    </location>
    <ligand>
        <name>substrate</name>
    </ligand>
</feature>
<feature type="binding site" evidence="1">
    <location>
        <begin position="206"/>
        <end position="208"/>
    </location>
    <ligand>
        <name>NAD(+)</name>
        <dbReference type="ChEBI" id="CHEBI:57540"/>
    </ligand>
</feature>
<feature type="binding site" evidence="1">
    <location>
        <position position="235"/>
    </location>
    <ligand>
        <name>substrate</name>
    </ligand>
</feature>
<feature type="binding site" evidence="1">
    <location>
        <position position="239"/>
    </location>
    <ligand>
        <name>substrate</name>
    </ligand>
</feature>
<feature type="binding site" evidence="1">
    <location>
        <position position="240"/>
    </location>
    <ligand>
        <name>NAD(+)</name>
        <dbReference type="ChEBI" id="CHEBI:57540"/>
    </ligand>
</feature>
<feature type="binding site" evidence="1">
    <location>
        <begin position="269"/>
        <end position="274"/>
    </location>
    <ligand>
        <name>NAD(+)</name>
        <dbReference type="ChEBI" id="CHEBI:57540"/>
    </ligand>
</feature>
<feature type="binding site" evidence="1">
    <location>
        <position position="292"/>
    </location>
    <ligand>
        <name>NAD(+)</name>
        <dbReference type="ChEBI" id="CHEBI:57540"/>
    </ligand>
</feature>
<feature type="binding site" evidence="1">
    <location>
        <position position="327"/>
    </location>
    <ligand>
        <name>NAD(+)</name>
        <dbReference type="ChEBI" id="CHEBI:57540"/>
    </ligand>
</feature>
<feature type="binding site" evidence="1">
    <location>
        <begin position="348"/>
        <end position="350"/>
    </location>
    <ligand>
        <name>NAD(+)</name>
        <dbReference type="ChEBI" id="CHEBI:57540"/>
    </ligand>
</feature>
<feature type="binding site" evidence="1">
    <location>
        <position position="397"/>
    </location>
    <ligand>
        <name>NAD(+)</name>
        <dbReference type="ChEBI" id="CHEBI:57540"/>
    </ligand>
</feature>
<feature type="strand" evidence="3">
    <location>
        <begin position="13"/>
        <end position="17"/>
    </location>
</feature>
<feature type="helix" evidence="3">
    <location>
        <begin position="19"/>
        <end position="21"/>
    </location>
</feature>
<feature type="helix" evidence="3">
    <location>
        <begin position="22"/>
        <end position="34"/>
    </location>
</feature>
<feature type="helix" evidence="3">
    <location>
        <begin position="37"/>
        <end position="46"/>
    </location>
</feature>
<feature type="helix" evidence="3">
    <location>
        <begin position="47"/>
        <end position="49"/>
    </location>
</feature>
<feature type="turn" evidence="3">
    <location>
        <begin position="51"/>
        <end position="54"/>
    </location>
</feature>
<feature type="strand" evidence="3">
    <location>
        <begin position="56"/>
        <end position="61"/>
    </location>
</feature>
<feature type="helix" evidence="3">
    <location>
        <begin position="65"/>
        <end position="76"/>
    </location>
</feature>
<feature type="strand" evidence="3">
    <location>
        <begin position="80"/>
        <end position="84"/>
    </location>
</feature>
<feature type="turn" evidence="4">
    <location>
        <begin position="88"/>
        <end position="90"/>
    </location>
</feature>
<feature type="helix" evidence="3">
    <location>
        <begin position="93"/>
        <end position="102"/>
    </location>
</feature>
<feature type="strand" evidence="3">
    <location>
        <begin position="105"/>
        <end position="108"/>
    </location>
</feature>
<feature type="helix" evidence="3">
    <location>
        <begin position="114"/>
        <end position="125"/>
    </location>
</feature>
<feature type="strand" evidence="3">
    <location>
        <begin position="134"/>
        <end position="141"/>
    </location>
</feature>
<feature type="helix" evidence="3">
    <location>
        <begin position="142"/>
        <end position="160"/>
    </location>
</feature>
<feature type="helix" evidence="3">
    <location>
        <begin position="166"/>
        <end position="168"/>
    </location>
</feature>
<feature type="helix" evidence="3">
    <location>
        <begin position="172"/>
        <end position="185"/>
    </location>
</feature>
<feature type="helix" evidence="3">
    <location>
        <begin position="191"/>
        <end position="198"/>
    </location>
</feature>
<feature type="strand" evidence="3">
    <location>
        <begin position="201"/>
        <end position="204"/>
    </location>
</feature>
<feature type="helix" evidence="3">
    <location>
        <begin position="207"/>
        <end position="218"/>
    </location>
</feature>
<feature type="strand" evidence="3">
    <location>
        <begin position="226"/>
        <end position="228"/>
    </location>
</feature>
<feature type="helix" evidence="3">
    <location>
        <begin position="233"/>
        <end position="236"/>
    </location>
</feature>
<feature type="helix" evidence="3">
    <location>
        <begin position="239"/>
        <end position="256"/>
    </location>
</feature>
<feature type="strand" evidence="3">
    <location>
        <begin position="264"/>
        <end position="268"/>
    </location>
</feature>
<feature type="helix" evidence="3">
    <location>
        <begin position="272"/>
        <end position="283"/>
    </location>
</feature>
<feature type="strand" evidence="3">
    <location>
        <begin position="287"/>
        <end position="291"/>
    </location>
</feature>
<feature type="helix" evidence="3">
    <location>
        <begin position="295"/>
        <end position="303"/>
    </location>
</feature>
<feature type="helix" evidence="3">
    <location>
        <begin position="311"/>
        <end position="313"/>
    </location>
</feature>
<feature type="turn" evidence="3">
    <location>
        <begin position="314"/>
        <end position="317"/>
    </location>
</feature>
<feature type="strand" evidence="3">
    <location>
        <begin position="319"/>
        <end position="323"/>
    </location>
</feature>
<feature type="helix" evidence="3">
    <location>
        <begin position="333"/>
        <end position="336"/>
    </location>
</feature>
<feature type="strand" evidence="3">
    <location>
        <begin position="343"/>
        <end position="350"/>
    </location>
</feature>
<feature type="turn" evidence="3">
    <location>
        <begin position="351"/>
        <end position="354"/>
    </location>
</feature>
<feature type="helix" evidence="3">
    <location>
        <begin position="357"/>
        <end position="361"/>
    </location>
</feature>
<feature type="strand" evidence="3">
    <location>
        <begin position="367"/>
        <end position="372"/>
    </location>
</feature>
<feature type="strand" evidence="3">
    <location>
        <begin position="375"/>
        <end position="379"/>
    </location>
</feature>
<feature type="turn" evidence="3">
    <location>
        <begin position="381"/>
        <end position="383"/>
    </location>
</feature>
<feature type="strand" evidence="3">
    <location>
        <begin position="386"/>
        <end position="390"/>
    </location>
</feature>
<feature type="helix" evidence="3">
    <location>
        <begin position="391"/>
        <end position="393"/>
    </location>
</feature>
<feature type="helix" evidence="3">
    <location>
        <begin position="396"/>
        <end position="400"/>
    </location>
</feature>
<feature type="helix" evidence="3">
    <location>
        <begin position="406"/>
        <end position="425"/>
    </location>
</feature>
<feature type="turn" evidence="3">
    <location>
        <begin position="426"/>
        <end position="429"/>
    </location>
</feature>
<feature type="strand" evidence="3">
    <location>
        <begin position="434"/>
        <end position="437"/>
    </location>
</feature>
<feature type="helix" evidence="3">
    <location>
        <begin position="441"/>
        <end position="452"/>
    </location>
</feature>
<feature type="helix" evidence="3">
    <location>
        <begin position="453"/>
        <end position="455"/>
    </location>
</feature>
<feature type="helix" evidence="3">
    <location>
        <begin position="464"/>
        <end position="469"/>
    </location>
</feature>
<gene>
    <name type="primary">SAHH</name>
    <name type="synonym">SHH</name>
</gene>
<reference key="1">
    <citation type="submission" date="1999-09" db="EMBL/GenBank/DDBJ databases">
        <title>S-adenosyl-L-homocysteinase cDNA sequence from Lupinus luteus.</title>
        <authorList>
            <person name="Janowski R."/>
            <person name="Podkowinski J."/>
            <person name="Kisiel A."/>
            <person name="Jaskolski M."/>
        </authorList>
    </citation>
    <scope>NUCLEOTIDE SEQUENCE [MRNA]</scope>
    <source>
        <tissue>Root</tissue>
    </source>
</reference>